<accession>A8EZ83</accession>
<evidence type="ECO:0000250" key="1"/>
<evidence type="ECO:0000255" key="2">
    <source>
        <dbReference type="HAMAP-Rule" id="MF_01356"/>
    </source>
</evidence>
<comment type="function">
    <text evidence="1">NDH-1 shuttles electrons from NADH, via FMN and iron-sulfur (Fe-S) centers, to quinones in the respiratory chain. Couples the redox reaction to proton translocation (for every two electrons transferred, four hydrogen ions are translocated across the cytoplasmic membrane), and thus conserves the redox energy in a proton gradient (By similarity).</text>
</comment>
<comment type="catalytic activity">
    <reaction evidence="2">
        <text>a quinone + NADH + 5 H(+)(in) = a quinol + NAD(+) + 4 H(+)(out)</text>
        <dbReference type="Rhea" id="RHEA:57888"/>
        <dbReference type="ChEBI" id="CHEBI:15378"/>
        <dbReference type="ChEBI" id="CHEBI:24646"/>
        <dbReference type="ChEBI" id="CHEBI:57540"/>
        <dbReference type="ChEBI" id="CHEBI:57945"/>
        <dbReference type="ChEBI" id="CHEBI:132124"/>
    </reaction>
</comment>
<comment type="cofactor">
    <cofactor evidence="2">
        <name>[4Fe-4S] cluster</name>
        <dbReference type="ChEBI" id="CHEBI:49883"/>
    </cofactor>
    <text evidence="2">Binds 1 [4Fe-4S] cluster.</text>
</comment>
<comment type="subunit">
    <text evidence="2">NDH-1 is composed of 14 different subunits. Subunits NuoB, C, D, E, F, and G constitute the peripheral sector of the complex.</text>
</comment>
<comment type="subcellular location">
    <subcellularLocation>
        <location evidence="2">Cell inner membrane</location>
        <topology evidence="2">Peripheral membrane protein</topology>
        <orientation evidence="2">Cytoplasmic side</orientation>
    </subcellularLocation>
</comment>
<comment type="similarity">
    <text evidence="2">Belongs to the complex I 20 kDa subunit family.</text>
</comment>
<sequence length="174" mass="19685">MKNSFYQEDEILNNKLSNRGFLLTKVDDVIGWARANSLWPMTFGLACCAVEMMQAAASRYDMDRFGMLFRPSPRQSDLMIVAGTLTNKMAPALRKVYDQMAEPKWVLSMGSCANGGGYYHFSYSVVRGCDRIVPVDIYIPGCPPTAEALIYGLMQLQKKIKRTTGFKYDSRQTY</sequence>
<gene>
    <name evidence="2" type="primary">nuoB</name>
    <name type="ordered locus">A1E_03675</name>
</gene>
<dbReference type="EC" id="7.1.1.-" evidence="2"/>
<dbReference type="EMBL" id="CP000409">
    <property type="protein sequence ID" value="ABV73666.1"/>
    <property type="molecule type" value="Genomic_DNA"/>
</dbReference>
<dbReference type="RefSeq" id="WP_012148861.1">
    <property type="nucleotide sequence ID" value="NC_009879.1"/>
</dbReference>
<dbReference type="SMR" id="A8EZ83"/>
<dbReference type="STRING" id="293613.A1E_03675"/>
<dbReference type="KEGG" id="rcm:A1E_03675"/>
<dbReference type="eggNOG" id="COG0377">
    <property type="taxonomic scope" value="Bacteria"/>
</dbReference>
<dbReference type="HOGENOM" id="CLU_055737_7_0_5"/>
<dbReference type="Proteomes" id="UP000007056">
    <property type="component" value="Chromosome"/>
</dbReference>
<dbReference type="GO" id="GO:0005886">
    <property type="term" value="C:plasma membrane"/>
    <property type="evidence" value="ECO:0007669"/>
    <property type="project" value="UniProtKB-SubCell"/>
</dbReference>
<dbReference type="GO" id="GO:0045271">
    <property type="term" value="C:respiratory chain complex I"/>
    <property type="evidence" value="ECO:0007669"/>
    <property type="project" value="TreeGrafter"/>
</dbReference>
<dbReference type="GO" id="GO:0051539">
    <property type="term" value="F:4 iron, 4 sulfur cluster binding"/>
    <property type="evidence" value="ECO:0007669"/>
    <property type="project" value="UniProtKB-KW"/>
</dbReference>
<dbReference type="GO" id="GO:0005506">
    <property type="term" value="F:iron ion binding"/>
    <property type="evidence" value="ECO:0007669"/>
    <property type="project" value="UniProtKB-UniRule"/>
</dbReference>
<dbReference type="GO" id="GO:0008137">
    <property type="term" value="F:NADH dehydrogenase (ubiquinone) activity"/>
    <property type="evidence" value="ECO:0007669"/>
    <property type="project" value="InterPro"/>
</dbReference>
<dbReference type="GO" id="GO:0050136">
    <property type="term" value="F:NADH:ubiquinone reductase (non-electrogenic) activity"/>
    <property type="evidence" value="ECO:0007669"/>
    <property type="project" value="UniProtKB-UniRule"/>
</dbReference>
<dbReference type="GO" id="GO:0048038">
    <property type="term" value="F:quinone binding"/>
    <property type="evidence" value="ECO:0007669"/>
    <property type="project" value="UniProtKB-KW"/>
</dbReference>
<dbReference type="GO" id="GO:0009060">
    <property type="term" value="P:aerobic respiration"/>
    <property type="evidence" value="ECO:0007669"/>
    <property type="project" value="TreeGrafter"/>
</dbReference>
<dbReference type="GO" id="GO:0015990">
    <property type="term" value="P:electron transport coupled proton transport"/>
    <property type="evidence" value="ECO:0007669"/>
    <property type="project" value="TreeGrafter"/>
</dbReference>
<dbReference type="FunFam" id="3.40.50.12280:FF:000001">
    <property type="entry name" value="NADH-quinone oxidoreductase subunit B 2"/>
    <property type="match status" value="1"/>
</dbReference>
<dbReference type="Gene3D" id="3.40.50.12280">
    <property type="match status" value="1"/>
</dbReference>
<dbReference type="HAMAP" id="MF_01356">
    <property type="entry name" value="NDH1_NuoB"/>
    <property type="match status" value="1"/>
</dbReference>
<dbReference type="InterPro" id="IPR006137">
    <property type="entry name" value="NADH_UbQ_OxRdtase-like_20kDa"/>
</dbReference>
<dbReference type="InterPro" id="IPR006138">
    <property type="entry name" value="NADH_UQ_OxRdtase_20Kd_su"/>
</dbReference>
<dbReference type="NCBIfam" id="TIGR01957">
    <property type="entry name" value="nuoB_fam"/>
    <property type="match status" value="1"/>
</dbReference>
<dbReference type="NCBIfam" id="NF005012">
    <property type="entry name" value="PRK06411.1"/>
    <property type="match status" value="1"/>
</dbReference>
<dbReference type="PANTHER" id="PTHR11995">
    <property type="entry name" value="NADH DEHYDROGENASE"/>
    <property type="match status" value="1"/>
</dbReference>
<dbReference type="PANTHER" id="PTHR11995:SF14">
    <property type="entry name" value="NADH DEHYDROGENASE [UBIQUINONE] IRON-SULFUR PROTEIN 7, MITOCHONDRIAL"/>
    <property type="match status" value="1"/>
</dbReference>
<dbReference type="Pfam" id="PF01058">
    <property type="entry name" value="Oxidored_q6"/>
    <property type="match status" value="1"/>
</dbReference>
<dbReference type="SUPFAM" id="SSF56770">
    <property type="entry name" value="HydA/Nqo6-like"/>
    <property type="match status" value="1"/>
</dbReference>
<dbReference type="PROSITE" id="PS01150">
    <property type="entry name" value="COMPLEX1_20K"/>
    <property type="match status" value="1"/>
</dbReference>
<feature type="chain" id="PRO_0000358473" description="NADH-quinone oxidoreductase subunit B">
    <location>
        <begin position="1"/>
        <end position="174"/>
    </location>
</feature>
<feature type="binding site" evidence="2">
    <location>
        <position position="47"/>
    </location>
    <ligand>
        <name>[4Fe-4S] cluster</name>
        <dbReference type="ChEBI" id="CHEBI:49883"/>
    </ligand>
</feature>
<feature type="binding site" evidence="2">
    <location>
        <position position="48"/>
    </location>
    <ligand>
        <name>[4Fe-4S] cluster</name>
        <dbReference type="ChEBI" id="CHEBI:49883"/>
    </ligand>
</feature>
<feature type="binding site" evidence="2">
    <location>
        <position position="112"/>
    </location>
    <ligand>
        <name>[4Fe-4S] cluster</name>
        <dbReference type="ChEBI" id="CHEBI:49883"/>
    </ligand>
</feature>
<feature type="binding site" evidence="2">
    <location>
        <position position="142"/>
    </location>
    <ligand>
        <name>[4Fe-4S] cluster</name>
        <dbReference type="ChEBI" id="CHEBI:49883"/>
    </ligand>
</feature>
<reference key="1">
    <citation type="submission" date="2007-09" db="EMBL/GenBank/DDBJ databases">
        <title>Complete genome sequence of Rickettsia canadensis.</title>
        <authorList>
            <person name="Madan A."/>
            <person name="Fahey J."/>
            <person name="Helton E."/>
            <person name="Ketteman M."/>
            <person name="Madan A."/>
            <person name="Rodrigues S."/>
            <person name="Sanchez A."/>
            <person name="Whiting M."/>
            <person name="Dasch G."/>
            <person name="Eremeeva M."/>
        </authorList>
    </citation>
    <scope>NUCLEOTIDE SEQUENCE [LARGE SCALE GENOMIC DNA]</scope>
    <source>
        <strain>McKiel</strain>
    </source>
</reference>
<proteinExistence type="inferred from homology"/>
<name>NUOB_RICCK</name>
<organism>
    <name type="scientific">Rickettsia canadensis (strain McKiel)</name>
    <dbReference type="NCBI Taxonomy" id="293613"/>
    <lineage>
        <taxon>Bacteria</taxon>
        <taxon>Pseudomonadati</taxon>
        <taxon>Pseudomonadota</taxon>
        <taxon>Alphaproteobacteria</taxon>
        <taxon>Rickettsiales</taxon>
        <taxon>Rickettsiaceae</taxon>
        <taxon>Rickettsieae</taxon>
        <taxon>Rickettsia</taxon>
        <taxon>belli group</taxon>
    </lineage>
</organism>
<protein>
    <recommendedName>
        <fullName evidence="2">NADH-quinone oxidoreductase subunit B</fullName>
        <ecNumber evidence="2">7.1.1.-</ecNumber>
    </recommendedName>
    <alternativeName>
        <fullName evidence="2">NADH dehydrogenase I subunit B</fullName>
    </alternativeName>
    <alternativeName>
        <fullName evidence="2">NDH-1 subunit B</fullName>
    </alternativeName>
</protein>
<keyword id="KW-0004">4Fe-4S</keyword>
<keyword id="KW-0997">Cell inner membrane</keyword>
<keyword id="KW-1003">Cell membrane</keyword>
<keyword id="KW-0408">Iron</keyword>
<keyword id="KW-0411">Iron-sulfur</keyword>
<keyword id="KW-0472">Membrane</keyword>
<keyword id="KW-0479">Metal-binding</keyword>
<keyword id="KW-0520">NAD</keyword>
<keyword id="KW-0874">Quinone</keyword>
<keyword id="KW-1278">Translocase</keyword>
<keyword id="KW-0813">Transport</keyword>
<keyword id="KW-0830">Ubiquinone</keyword>